<sequence>MSGRDNRGAGGGGGGGGGGGHHHQPLSSAMGKLKEKLTRAGEELGYHRVESNLSTSNTGTSLDTILPEDPFPFPQAAPQRHPQQQFPHLQSPQQQRQQLQQQQLQQQQLHLQQPQQQLQQQQQPQQQLRLLHDVDDEPPLSFRPLLEDVDINEPPQQIHVQQQQQQLPRTALRASGSLELTPLPPPPTSLEPHRDRQQRSIVTGGEELQRSKQSLKGSRVSFEKPRGEQLPAKAAESSDEDSFEDKRIGFQQQKATSVDHKGILKDLKHILANDNRRQFQAKKHVSLDIKGTRFLKDLLKDSSSEEEFHKTRREFQGRKHQSLDPRVTFKLDKVLQGSSTDSDEEGDDAEHKRLIHRPKDITKPVIIDLKDLESESDEDFLTSRQNFQQQRSISTDSRKSRRLYEMDEMGNKRGDNIRHAVPFVRQITEDGKPKLEVYRPTTNPIYIWTQVLAALSVSLGSLVVGFASAYTSPALVSMTNTNLTSFVVTPQAASWVGGIMPLAGLAGGIAGGPFIEYLGRRNTILATAVPFIVSWLLIACAVNVIMVLCGRFLAGFCVGIASLSLPVYLGETVQPEVRGTLGLLPTAFGNIGILLCFVAGTYMDWSMLAFLGASLPVPFLILMFLIPETPRWYVSRGREERARKALVWLRGKEADVEPELKGLMRSQADADRQATQNKMLELLKRSNLKPLSISLGLMFFQQLSGINAVIFYTVQIFQDAGSTIDGNVCTIIVGVVNFAATFIATILIDRAGRKVLLYVSNVMMVLTLFVLGGFFYCKSSGMDTSNVGWLPLSCFVIYILGFSLGFGPIPWLMMGEILPAKIRGSAASVATAFNWSCTFVVTKSFQDMIDFMGAHGAFWMFGAICFIGLFFVIFYVPETQGKTLEDIERKMMGRVRRMSSVANIKPLSFNM</sequence>
<keyword id="KW-1003">Cell membrane</keyword>
<keyword id="KW-0325">Glycoprotein</keyword>
<keyword id="KW-0472">Membrane</keyword>
<keyword id="KW-0597">Phosphoprotein</keyword>
<keyword id="KW-1185">Reference proteome</keyword>
<keyword id="KW-0762">Sugar transport</keyword>
<keyword id="KW-0812">Transmembrane</keyword>
<keyword id="KW-1133">Transmembrane helix</keyword>
<keyword id="KW-0813">Transport</keyword>
<accession>B4LPX5</accession>
<dbReference type="EMBL" id="CH940648">
    <property type="protein sequence ID" value="EDW61315.1"/>
    <property type="status" value="ALT_SEQ"/>
    <property type="molecule type" value="Genomic_DNA"/>
</dbReference>
<dbReference type="RefSeq" id="XP_002050122.2">
    <property type="nucleotide sequence ID" value="XM_002050086.2"/>
</dbReference>
<dbReference type="SMR" id="B4LPX5"/>
<dbReference type="FunCoup" id="B4LPX5">
    <property type="interactions" value="171"/>
</dbReference>
<dbReference type="GlyCosmos" id="B4LPX5">
    <property type="glycosylation" value="1 site, No reported glycans"/>
</dbReference>
<dbReference type="EnsemblMetazoa" id="FBtr0435437">
    <property type="protein sequence ID" value="FBpp0392404"/>
    <property type="gene ID" value="FBgn0207506"/>
</dbReference>
<dbReference type="EnsemblMetazoa" id="XM_032435821.1">
    <property type="protein sequence ID" value="XP_032291712.1"/>
    <property type="gene ID" value="LOC6625103"/>
</dbReference>
<dbReference type="eggNOG" id="KOG0254">
    <property type="taxonomic scope" value="Eukaryota"/>
</dbReference>
<dbReference type="InParanoid" id="B4LPX5"/>
<dbReference type="OrthoDB" id="6339427at2759"/>
<dbReference type="Proteomes" id="UP000008792">
    <property type="component" value="Unassembled WGS sequence"/>
</dbReference>
<dbReference type="GO" id="GO:0005886">
    <property type="term" value="C:plasma membrane"/>
    <property type="evidence" value="ECO:0000250"/>
    <property type="project" value="UniProtKB"/>
</dbReference>
<dbReference type="GO" id="GO:0051119">
    <property type="term" value="F:sugar transmembrane transporter activity"/>
    <property type="evidence" value="ECO:0007669"/>
    <property type="project" value="InterPro"/>
</dbReference>
<dbReference type="GO" id="GO:0015574">
    <property type="term" value="F:trehalose transmembrane transporter activity"/>
    <property type="evidence" value="ECO:0000250"/>
    <property type="project" value="UniProtKB"/>
</dbReference>
<dbReference type="GO" id="GO:0015771">
    <property type="term" value="P:trehalose transport"/>
    <property type="evidence" value="ECO:0000250"/>
    <property type="project" value="UniProtKB"/>
</dbReference>
<dbReference type="CDD" id="cd17358">
    <property type="entry name" value="MFS_GLUT6_8_Class3_like"/>
    <property type="match status" value="1"/>
</dbReference>
<dbReference type="FunFam" id="1.20.1250.20:FF:000055">
    <property type="entry name" value="Facilitated trehalose transporter Tret1-2 homolog"/>
    <property type="match status" value="1"/>
</dbReference>
<dbReference type="Gene3D" id="1.20.1250.20">
    <property type="entry name" value="MFS general substrate transporter like domains"/>
    <property type="match status" value="1"/>
</dbReference>
<dbReference type="InterPro" id="IPR020846">
    <property type="entry name" value="MFS_dom"/>
</dbReference>
<dbReference type="InterPro" id="IPR044775">
    <property type="entry name" value="MFS_ERD6/Tret1-like"/>
</dbReference>
<dbReference type="InterPro" id="IPR005828">
    <property type="entry name" value="MFS_sugar_transport-like"/>
</dbReference>
<dbReference type="InterPro" id="IPR036259">
    <property type="entry name" value="MFS_trans_sf"/>
</dbReference>
<dbReference type="InterPro" id="IPR050549">
    <property type="entry name" value="MFS_Trehalose_Transporter"/>
</dbReference>
<dbReference type="InterPro" id="IPR003663">
    <property type="entry name" value="Sugar/inositol_transpt"/>
</dbReference>
<dbReference type="InterPro" id="IPR005829">
    <property type="entry name" value="Sugar_transporter_CS"/>
</dbReference>
<dbReference type="NCBIfam" id="TIGR00879">
    <property type="entry name" value="SP"/>
    <property type="match status" value="1"/>
</dbReference>
<dbReference type="PANTHER" id="PTHR48021">
    <property type="match status" value="1"/>
</dbReference>
<dbReference type="PANTHER" id="PTHR48021:SF96">
    <property type="entry name" value="FACILITATED TREHALOSE TRANSPORTER TRET1-1-RELATED"/>
    <property type="match status" value="1"/>
</dbReference>
<dbReference type="Pfam" id="PF00083">
    <property type="entry name" value="Sugar_tr"/>
    <property type="match status" value="1"/>
</dbReference>
<dbReference type="PRINTS" id="PR00171">
    <property type="entry name" value="SUGRTRNSPORT"/>
</dbReference>
<dbReference type="SUPFAM" id="SSF103473">
    <property type="entry name" value="MFS general substrate transporter"/>
    <property type="match status" value="1"/>
</dbReference>
<dbReference type="PROSITE" id="PS50850">
    <property type="entry name" value="MFS"/>
    <property type="match status" value="1"/>
</dbReference>
<dbReference type="PROSITE" id="PS00216">
    <property type="entry name" value="SUGAR_TRANSPORT_1"/>
    <property type="match status" value="1"/>
</dbReference>
<dbReference type="PROSITE" id="PS00217">
    <property type="entry name" value="SUGAR_TRANSPORT_2"/>
    <property type="match status" value="1"/>
</dbReference>
<protein>
    <recommendedName>
        <fullName evidence="1">Facilitated trehalose transporter Tret1</fullName>
    </recommendedName>
</protein>
<organism>
    <name type="scientific">Drosophila virilis</name>
    <name type="common">Fruit fly</name>
    <dbReference type="NCBI Taxonomy" id="7244"/>
    <lineage>
        <taxon>Eukaryota</taxon>
        <taxon>Metazoa</taxon>
        <taxon>Ecdysozoa</taxon>
        <taxon>Arthropoda</taxon>
        <taxon>Hexapoda</taxon>
        <taxon>Insecta</taxon>
        <taxon>Pterygota</taxon>
        <taxon>Neoptera</taxon>
        <taxon>Endopterygota</taxon>
        <taxon>Diptera</taxon>
        <taxon>Brachycera</taxon>
        <taxon>Muscomorpha</taxon>
        <taxon>Ephydroidea</taxon>
        <taxon>Drosophilidae</taxon>
        <taxon>Drosophila</taxon>
    </lineage>
</organism>
<name>TRET1_DROVI</name>
<feature type="chain" id="PRO_0000395548" description="Facilitated trehalose transporter Tret1">
    <location>
        <begin position="1"/>
        <end position="911"/>
    </location>
</feature>
<feature type="topological domain" description="Cytoplasmic" evidence="2">
    <location>
        <begin position="1"/>
        <end position="446"/>
    </location>
</feature>
<feature type="transmembrane region" description="Helical; Name=1" evidence="2">
    <location>
        <begin position="447"/>
        <end position="467"/>
    </location>
</feature>
<feature type="topological domain" description="Extracellular" evidence="2">
    <location>
        <begin position="468"/>
        <end position="494"/>
    </location>
</feature>
<feature type="transmembrane region" description="Helical; Name=2" evidence="2">
    <location>
        <begin position="495"/>
        <end position="515"/>
    </location>
</feature>
<feature type="topological domain" description="Cytoplasmic" evidence="2">
    <location>
        <begin position="516"/>
        <end position="527"/>
    </location>
</feature>
<feature type="transmembrane region" description="Helical; Name=3" evidence="2">
    <location>
        <begin position="528"/>
        <end position="548"/>
    </location>
</feature>
<feature type="topological domain" description="Extracellular" evidence="2">
    <location>
        <begin position="549"/>
        <end position="551"/>
    </location>
</feature>
<feature type="transmembrane region" description="Helical; Name=4" evidence="2">
    <location>
        <begin position="552"/>
        <end position="572"/>
    </location>
</feature>
<feature type="topological domain" description="Cytoplasmic" evidence="2">
    <location>
        <begin position="573"/>
        <end position="578"/>
    </location>
</feature>
<feature type="transmembrane region" description="Helical; Name=5" evidence="2">
    <location>
        <begin position="579"/>
        <end position="599"/>
    </location>
</feature>
<feature type="topological domain" description="Extracellular" evidence="2">
    <location>
        <begin position="600"/>
        <end position="606"/>
    </location>
</feature>
<feature type="transmembrane region" description="Helical; Name=6" evidence="2">
    <location>
        <begin position="607"/>
        <end position="627"/>
    </location>
</feature>
<feature type="topological domain" description="Cytoplasmic" evidence="2">
    <location>
        <begin position="628"/>
        <end position="690"/>
    </location>
</feature>
<feature type="transmembrane region" description="Helical; Name=7" evidence="2">
    <location>
        <begin position="691"/>
        <end position="711"/>
    </location>
</feature>
<feature type="topological domain" description="Extracellular" evidence="2">
    <location>
        <begin position="712"/>
        <end position="727"/>
    </location>
</feature>
<feature type="transmembrane region" description="Helical; Name=8" evidence="2">
    <location>
        <begin position="728"/>
        <end position="748"/>
    </location>
</feature>
<feature type="topological domain" description="Cytoplasmic" evidence="2">
    <location>
        <begin position="749"/>
        <end position="754"/>
    </location>
</feature>
<feature type="transmembrane region" description="Helical; Name=9" evidence="2">
    <location>
        <begin position="755"/>
        <end position="775"/>
    </location>
</feature>
<feature type="topological domain" description="Extracellular" evidence="2">
    <location>
        <begin position="776"/>
        <end position="794"/>
    </location>
</feature>
<feature type="transmembrane region" description="Helical; Name=10" evidence="2">
    <location>
        <begin position="795"/>
        <end position="815"/>
    </location>
</feature>
<feature type="topological domain" description="Cytoplasmic" evidence="2">
    <location>
        <begin position="816"/>
        <end position="821"/>
    </location>
</feature>
<feature type="transmembrane region" description="Helical; Name=11" evidence="2">
    <location>
        <begin position="822"/>
        <end position="842"/>
    </location>
</feature>
<feature type="topological domain" description="Extracellular" evidence="2">
    <location>
        <begin position="843"/>
        <end position="855"/>
    </location>
</feature>
<feature type="transmembrane region" description="Helical; Name=12" evidence="2">
    <location>
        <begin position="856"/>
        <end position="876"/>
    </location>
</feature>
<feature type="topological domain" description="Cytoplasmic" evidence="2">
    <location>
        <begin position="877"/>
        <end position="911"/>
    </location>
</feature>
<feature type="region of interest" description="Disordered" evidence="3">
    <location>
        <begin position="1"/>
        <end position="256"/>
    </location>
</feature>
<feature type="region of interest" description="Disordered" evidence="3">
    <location>
        <begin position="334"/>
        <end position="355"/>
    </location>
</feature>
<feature type="region of interest" description="Disordered" evidence="3">
    <location>
        <begin position="380"/>
        <end position="402"/>
    </location>
</feature>
<feature type="compositionally biased region" description="Gly residues" evidence="3">
    <location>
        <begin position="8"/>
        <end position="19"/>
    </location>
</feature>
<feature type="compositionally biased region" description="Basic and acidic residues" evidence="3">
    <location>
        <begin position="32"/>
        <end position="50"/>
    </location>
</feature>
<feature type="compositionally biased region" description="Low complexity" evidence="3">
    <location>
        <begin position="51"/>
        <end position="64"/>
    </location>
</feature>
<feature type="compositionally biased region" description="Low complexity" evidence="3">
    <location>
        <begin position="76"/>
        <end position="129"/>
    </location>
</feature>
<feature type="compositionally biased region" description="Low complexity" evidence="3">
    <location>
        <begin position="156"/>
        <end position="166"/>
    </location>
</feature>
<feature type="compositionally biased region" description="Polar residues" evidence="3">
    <location>
        <begin position="384"/>
        <end position="395"/>
    </location>
</feature>
<feature type="modified residue" description="Phosphoserine" evidence="1">
    <location>
        <position position="302"/>
    </location>
</feature>
<feature type="modified residue" description="Phosphoserine" evidence="1">
    <location>
        <position position="303"/>
    </location>
</feature>
<feature type="modified residue" description="Phosphoserine" evidence="1">
    <location>
        <position position="304"/>
    </location>
</feature>
<feature type="modified residue" description="Phosphoserine" evidence="1">
    <location>
        <position position="374"/>
    </location>
</feature>
<feature type="modified residue" description="Phosphoserine" evidence="1">
    <location>
        <position position="376"/>
    </location>
</feature>
<feature type="modified residue" description="Phosphoserine" evidence="1">
    <location>
        <position position="899"/>
    </location>
</feature>
<feature type="modified residue" description="Phosphoserine" evidence="1">
    <location>
        <position position="900"/>
    </location>
</feature>
<feature type="glycosylation site" description="N-linked (GlcNAc...) asparagine" evidence="2">
    <location>
        <position position="482"/>
    </location>
</feature>
<proteinExistence type="inferred from homology"/>
<evidence type="ECO:0000250" key="1">
    <source>
        <dbReference type="UniProtKB" id="A1Z8N1"/>
    </source>
</evidence>
<evidence type="ECO:0000255" key="2"/>
<evidence type="ECO:0000256" key="3">
    <source>
        <dbReference type="SAM" id="MobiDB-lite"/>
    </source>
</evidence>
<evidence type="ECO:0000305" key="4"/>
<evidence type="ECO:0000312" key="5">
    <source>
        <dbReference type="EMBL" id="EDW61315.1"/>
    </source>
</evidence>
<comment type="function">
    <text evidence="1">Low-capacity facilitative transporter for trehalose. Does not transport maltose, sucrose or lactose. Mediates the bidirectional transfer of trehalose. Responsible for the transport of trehalose synthesized in the fat body and the incorporation of trehalose into other tissues that require a carbon source, thereby regulating trehalose levels in the hemolymph (By similarity).</text>
</comment>
<comment type="subcellular location">
    <subcellularLocation>
        <location evidence="1">Cell membrane</location>
        <topology evidence="1">Multi-pass membrane protein</topology>
    </subcellularLocation>
</comment>
<comment type="similarity">
    <text evidence="1 2">Belongs to the major facilitator superfamily. Sugar transporter (TC 2.A.1.1) family. Trehalose transporter subfamily.</text>
</comment>
<comment type="sequence caution" evidence="4">
    <conflict type="erroneous gene model prediction">
        <sequence resource="EMBL-CDS" id="EDW61315"/>
    </conflict>
</comment>
<gene>
    <name evidence="1" type="primary">Tret1</name>
    <name type="ORF">GJ20366</name>
</gene>
<reference evidence="5" key="1">
    <citation type="journal article" date="2007" name="Nature">
        <title>Evolution of genes and genomes on the Drosophila phylogeny.</title>
        <authorList>
            <consortium name="Drosophila 12 genomes consortium"/>
        </authorList>
    </citation>
    <scope>NUCLEOTIDE SEQUENCE [LARGE SCALE GENOMIC DNA]</scope>
    <source>
        <strain evidence="5">Tucson 15010-1051.87</strain>
    </source>
</reference>